<comment type="function">
    <text evidence="6">Type II acute-phase protein (APP) involved in inflammatory responses to trauma. May also play a role in liver development or regeneration.</text>
</comment>
<comment type="subunit">
    <text evidence="1">Interacts (via C-terminus) with DNAJC1 (via SANT 2 domain).</text>
</comment>
<comment type="subcellular location">
    <subcellularLocation>
        <location evidence="6">Secreted</location>
    </subcellularLocation>
</comment>
<comment type="induction">
    <text evidence="6">Levels of ITIH4 in serum increase 3- to 12-fold on inoculation with various bacteria which induce mastitis. Peak levels are reached around 42-72 hours after infection.</text>
</comment>
<comment type="PTM">
    <text evidence="1">Appears to be both N- and O-glycosylated.</text>
</comment>
<comment type="similarity">
    <text evidence="8">Belongs to the ITIH family.</text>
</comment>
<sequence>MKTPAPGRIHSIVLVLLSLAVLQTSKAQKVQNDIDIYSLTVDSKVSSRFAHTVITSRVVNKADAVREATFQMELPKKAFITNFSMVIDGVTYPGNIKEKAAAQEQYSAAVARGESAGLVRATGRKTEQFQVSVSVAPAAKVTFELVYEELLARHLGAYELLLKVRPQQLVKHLQMDIHIFEPQGISFLETESTFMTNKLAEALTTSQNKTKAHVRFKPTLSQQQKYPEKQDTVIDGSFIVRYDVDRPLSGGSIQIENGYFVHYFAPDSLSTIPKNVIFVIDKSGSMMGRKIKQTREALIKILDDLSPHDQFDLISFSSEATTWKPLLVPASTENVNEAKSYATGIQAQGGTNINDAMLMAVQLLEKANQEELLPEGSITLIILLTDGDPTVGETNPLNIQKNVRKAINGQHSLFCLGFGFDVSYAFLEKMALENGGLARRIYEDSDSALQLQDFYQEVANPLMTSVAFEYPSNAVESVTQDTFRVFFKGSELVVAGKLREQSPDVLLAQIRGQLHRENITYMMMSHVAEQEEMFRSPKYIFHSFIERLWAYLTIQQLLEQMVSALDAEKQALEARALSLSLSYSFVTPLTSMVITKPEGQEQSQVAEKPVEDESRGSRVYLGPMRFGHSVGDRTSRKPGGGLKLLNGTPLFGPPGPPAAASPFHRMTSRLVLPELMSPLAPASAPSPTSGPGGASHDTDFRIKGTTPTALPFAPVQAPSVILPLPGQSVDRLCVDLRRPQELVNLLSDPDQGVEVTGHFETAKARFSWIEVTFENPQVQIHASPEHVVMTRNRRNSAYKWKETLYSVMPGLKVTMDKEGLLLLSRPDRVTIGLLFWDGPGKGLRLLLQNTDRFSSHVSGTLGQFYQDVLWGPLDTADDSKRTLKVQGRDYSATRELKLDYQESPPGKEISCWSVEL</sequence>
<protein>
    <recommendedName>
        <fullName>Inter-alpha-trypsin inhibitor heavy chain H4</fullName>
        <shortName>ITI heavy chain H4</shortName>
        <shortName>ITI-HC4</shortName>
        <shortName>Inter-alpha-inhibitor heavy chain 4</shortName>
    </recommendedName>
</protein>
<name>ITIH4_BOVIN</name>
<accession>Q3T052</accession>
<proteinExistence type="evidence at protein level"/>
<reference key="1">
    <citation type="submission" date="2005-08" db="EMBL/GenBank/DDBJ databases">
        <authorList>
            <consortium name="NIH - Mammalian Gene Collection (MGC) project"/>
        </authorList>
    </citation>
    <scope>NUCLEOTIDE SEQUENCE [LARGE SCALE MRNA]</scope>
    <source>
        <strain>Hereford</strain>
        <tissue>Testis</tissue>
    </source>
</reference>
<reference key="2">
    <citation type="journal article" date="2004" name="Infect. Immun.">
        <title>ITIH4 (inter-alpha-trypsin inhibitor heavy chain 4) is a new acute-phase protein isolated from cattle during experimental infection.</title>
        <authorList>
            <person name="Pineiro M."/>
            <person name="Andres M."/>
            <person name="Iturralde M."/>
            <person name="Carmona S."/>
            <person name="Hirvonen J."/>
            <person name="Pyorala S."/>
            <person name="Heegaard P.M."/>
            <person name="Tjornehoj K."/>
            <person name="Lampreave F."/>
            <person name="Pineiro A."/>
            <person name="Alava M.A."/>
        </authorList>
    </citation>
    <scope>PROTEIN SEQUENCE OF 389-413</scope>
    <scope>INDUCTION</scope>
    <scope>SUBCELLULAR LOCATION</scope>
    <scope>FUNCTION</scope>
</reference>
<reference key="3">
    <citation type="journal article" date="2009" name="Mol. Cell. Proteomics">
        <title>Affinity enrichment and characterization of mucin core-1 type glycopeptides from bovine serum.</title>
        <authorList>
            <person name="Darula Z."/>
            <person name="Medzihradszky K.F."/>
        </authorList>
    </citation>
    <scope>GLYCOSYLATION AT SER-683; THR-705; THR-706 AND THR-708</scope>
    <scope>IDENTIFICATION BY MASS SPECTROMETRY</scope>
</reference>
<feature type="signal peptide" evidence="2">
    <location>
        <begin position="1"/>
        <end position="27"/>
    </location>
</feature>
<feature type="chain" id="PRO_0000285684" description="Inter-alpha-trypsin inhibitor heavy chain H4">
    <location>
        <begin position="28"/>
        <end position="916"/>
    </location>
</feature>
<feature type="domain" description="VIT" evidence="4">
    <location>
        <begin position="28"/>
        <end position="149"/>
    </location>
</feature>
<feature type="domain" description="VWFA" evidence="3">
    <location>
        <begin position="275"/>
        <end position="458"/>
    </location>
</feature>
<feature type="region of interest" description="Disordered" evidence="5">
    <location>
        <begin position="597"/>
        <end position="616"/>
    </location>
</feature>
<feature type="region of interest" description="Disordered" evidence="5">
    <location>
        <begin position="678"/>
        <end position="701"/>
    </location>
</feature>
<feature type="compositionally biased region" description="Low complexity" evidence="5">
    <location>
        <begin position="678"/>
        <end position="689"/>
    </location>
</feature>
<feature type="glycosylation site" description="N-linked (GlcNAc...) asparagine" evidence="2">
    <location>
        <position position="82"/>
    </location>
</feature>
<feature type="glycosylation site" description="N-linked (GlcNAc...) asparagine" evidence="2">
    <location>
        <position position="208"/>
    </location>
</feature>
<feature type="glycosylation site" description="N-linked (GlcNAc...) asparagine" evidence="2">
    <location>
        <position position="518"/>
    </location>
</feature>
<feature type="glycosylation site" description="O-linked (GalNAc...) serine" evidence="7">
    <location>
        <position position="683"/>
    </location>
</feature>
<feature type="glycosylation site" description="O-linked (GalNAc...) threonine" evidence="7">
    <location>
        <position position="705"/>
    </location>
</feature>
<feature type="glycosylation site" description="O-linked (GalNAc...) threonine" evidence="7">
    <location>
        <position position="706"/>
    </location>
</feature>
<feature type="glycosylation site" description="O-linked (GalNAc...) threonine" evidence="7">
    <location>
        <position position="708"/>
    </location>
</feature>
<feature type="disulfide bond" evidence="1">
    <location>
        <begin position="733"/>
        <end position="911"/>
    </location>
</feature>
<feature type="sequence conflict" description="In Ref. 2; AA sequence." evidence="8" ref="2">
    <original>T</original>
    <variation>D</variation>
    <location>
        <position position="390"/>
    </location>
</feature>
<feature type="sequence conflict" description="In Ref. 2; AA sequence." evidence="8" ref="2">
    <original>L</original>
    <variation>S</variation>
    <location>
        <position position="397"/>
    </location>
</feature>
<feature type="sequence conflict" description="In Ref. 2; AA sequence." evidence="8" ref="2">
    <original>HS</original>
    <variation>QV</variation>
    <location>
        <begin position="411"/>
        <end position="412"/>
    </location>
</feature>
<gene>
    <name type="primary">ITIH4</name>
</gene>
<dbReference type="EMBL" id="BC102561">
    <property type="protein sequence ID" value="AAI02562.1"/>
    <property type="molecule type" value="mRNA"/>
</dbReference>
<dbReference type="RefSeq" id="NP_001015590.2">
    <property type="nucleotide sequence ID" value="NM_001015590.3"/>
</dbReference>
<dbReference type="SMR" id="Q3T052"/>
<dbReference type="FunCoup" id="Q3T052">
    <property type="interactions" value="276"/>
</dbReference>
<dbReference type="STRING" id="9913.ENSBTAP00000073407"/>
<dbReference type="GlyConnect" id="801">
    <property type="glycosylation" value="2 O-Linked glycans (4 sites)"/>
</dbReference>
<dbReference type="GlyCosmos" id="Q3T052">
    <property type="glycosylation" value="7 sites, 1 glycan"/>
</dbReference>
<dbReference type="GlyGen" id="Q3T052">
    <property type="glycosylation" value="7 sites, 1 O-linked glycan (2 sites)"/>
</dbReference>
<dbReference type="iPTMnet" id="Q3T052"/>
<dbReference type="PaxDb" id="9913-ENSBTAP00000010330"/>
<dbReference type="PeptideAtlas" id="Q3T052"/>
<dbReference type="GeneID" id="513700"/>
<dbReference type="KEGG" id="bta:513700"/>
<dbReference type="CTD" id="3700"/>
<dbReference type="eggNOG" id="ENOG502QPS2">
    <property type="taxonomic scope" value="Eukaryota"/>
</dbReference>
<dbReference type="InParanoid" id="Q3T052"/>
<dbReference type="OrthoDB" id="299997at2759"/>
<dbReference type="Proteomes" id="UP000009136">
    <property type="component" value="Unplaced"/>
</dbReference>
<dbReference type="GO" id="GO:0005576">
    <property type="term" value="C:extracellular region"/>
    <property type="evidence" value="ECO:0007669"/>
    <property type="project" value="UniProtKB-SubCell"/>
</dbReference>
<dbReference type="GO" id="GO:0004867">
    <property type="term" value="F:serine-type endopeptidase inhibitor activity"/>
    <property type="evidence" value="ECO:0007669"/>
    <property type="project" value="UniProtKB-KW"/>
</dbReference>
<dbReference type="GO" id="GO:0006953">
    <property type="term" value="P:acute-phase response"/>
    <property type="evidence" value="ECO:0000270"/>
    <property type="project" value="UniProtKB"/>
</dbReference>
<dbReference type="GO" id="GO:0030212">
    <property type="term" value="P:hyaluronan metabolic process"/>
    <property type="evidence" value="ECO:0007669"/>
    <property type="project" value="InterPro"/>
</dbReference>
<dbReference type="CDD" id="cd01461">
    <property type="entry name" value="vWA_interalpha_trypsin_inhibitor"/>
    <property type="match status" value="1"/>
</dbReference>
<dbReference type="FunFam" id="3.40.50.410:FF:000013">
    <property type="entry name" value="inter-alpha-trypsin inhibitor heavy chain H2"/>
    <property type="match status" value="1"/>
</dbReference>
<dbReference type="Gene3D" id="3.40.50.410">
    <property type="entry name" value="von Willebrand factor, type A domain"/>
    <property type="match status" value="1"/>
</dbReference>
<dbReference type="InterPro" id="IPR010600">
    <property type="entry name" value="ITI_HC_C"/>
</dbReference>
<dbReference type="InterPro" id="IPR050934">
    <property type="entry name" value="ITIH"/>
</dbReference>
<dbReference type="InterPro" id="IPR013694">
    <property type="entry name" value="VIT"/>
</dbReference>
<dbReference type="InterPro" id="IPR002035">
    <property type="entry name" value="VWF_A"/>
</dbReference>
<dbReference type="InterPro" id="IPR036465">
    <property type="entry name" value="vWFA_dom_sf"/>
</dbReference>
<dbReference type="PANTHER" id="PTHR10338">
    <property type="entry name" value="INTER-ALPHA-TRYPSIN INHIBITOR HEAVY CHAIN FAMILY MEMBER"/>
    <property type="match status" value="1"/>
</dbReference>
<dbReference type="PANTHER" id="PTHR10338:SF119">
    <property type="entry name" value="INTER-ALPHA-TRYPSIN INHIBITOR HEAVY CHAIN H4"/>
    <property type="match status" value="1"/>
</dbReference>
<dbReference type="Pfam" id="PF06668">
    <property type="entry name" value="ITI_HC_C"/>
    <property type="match status" value="1"/>
</dbReference>
<dbReference type="Pfam" id="PF08487">
    <property type="entry name" value="VIT"/>
    <property type="match status" value="1"/>
</dbReference>
<dbReference type="Pfam" id="PF00092">
    <property type="entry name" value="VWA"/>
    <property type="match status" value="1"/>
</dbReference>
<dbReference type="SMART" id="SM00609">
    <property type="entry name" value="VIT"/>
    <property type="match status" value="1"/>
</dbReference>
<dbReference type="SMART" id="SM00327">
    <property type="entry name" value="VWA"/>
    <property type="match status" value="1"/>
</dbReference>
<dbReference type="SUPFAM" id="SSF53300">
    <property type="entry name" value="vWA-like"/>
    <property type="match status" value="1"/>
</dbReference>
<dbReference type="PROSITE" id="PS51468">
    <property type="entry name" value="VIT"/>
    <property type="match status" value="1"/>
</dbReference>
<dbReference type="PROSITE" id="PS50234">
    <property type="entry name" value="VWFA"/>
    <property type="match status" value="1"/>
</dbReference>
<keyword id="KW-0011">Acute phase</keyword>
<keyword id="KW-0903">Direct protein sequencing</keyword>
<keyword id="KW-1015">Disulfide bond</keyword>
<keyword id="KW-0325">Glycoprotein</keyword>
<keyword id="KW-0646">Protease inhibitor</keyword>
<keyword id="KW-1185">Reference proteome</keyword>
<keyword id="KW-0964">Secreted</keyword>
<keyword id="KW-0722">Serine protease inhibitor</keyword>
<keyword id="KW-0732">Signal</keyword>
<organism>
    <name type="scientific">Bos taurus</name>
    <name type="common">Bovine</name>
    <dbReference type="NCBI Taxonomy" id="9913"/>
    <lineage>
        <taxon>Eukaryota</taxon>
        <taxon>Metazoa</taxon>
        <taxon>Chordata</taxon>
        <taxon>Craniata</taxon>
        <taxon>Vertebrata</taxon>
        <taxon>Euteleostomi</taxon>
        <taxon>Mammalia</taxon>
        <taxon>Eutheria</taxon>
        <taxon>Laurasiatheria</taxon>
        <taxon>Artiodactyla</taxon>
        <taxon>Ruminantia</taxon>
        <taxon>Pecora</taxon>
        <taxon>Bovidae</taxon>
        <taxon>Bovinae</taxon>
        <taxon>Bos</taxon>
    </lineage>
</organism>
<evidence type="ECO:0000250" key="1"/>
<evidence type="ECO:0000255" key="2"/>
<evidence type="ECO:0000255" key="3">
    <source>
        <dbReference type="PROSITE-ProRule" id="PRU00219"/>
    </source>
</evidence>
<evidence type="ECO:0000255" key="4">
    <source>
        <dbReference type="PROSITE-ProRule" id="PRU00801"/>
    </source>
</evidence>
<evidence type="ECO:0000256" key="5">
    <source>
        <dbReference type="SAM" id="MobiDB-lite"/>
    </source>
</evidence>
<evidence type="ECO:0000269" key="6">
    <source>
    </source>
</evidence>
<evidence type="ECO:0000269" key="7">
    <source>
    </source>
</evidence>
<evidence type="ECO:0000305" key="8"/>